<organism>
    <name type="scientific">Human T-cell leukemia virus 1 (isolate Caribbea HS-35 subtype A)</name>
    <name type="common">HTLV-1</name>
    <dbReference type="NCBI Taxonomy" id="11927"/>
    <lineage>
        <taxon>Viruses</taxon>
        <taxon>Riboviria</taxon>
        <taxon>Pararnavirae</taxon>
        <taxon>Artverviricota</taxon>
        <taxon>Revtraviricetes</taxon>
        <taxon>Ortervirales</taxon>
        <taxon>Retroviridae</taxon>
        <taxon>Orthoretrovirinae</taxon>
        <taxon>Deltaretrovirus</taxon>
        <taxon>Primate T-lymphotropic virus 1</taxon>
    </lineage>
</organism>
<sequence length="651" mass="71664">MGQIFSRSASPIPRPPRGLAAHHWLNFLQAAYRLEPGPSSYDFHQLKKFLKIALETPVWICPINYSLLASLLPKGYPGRVNEILHILIQTQAQIPSRPAPPPPSSSTHDPPDSDPQIPPPYVEPTAPQVLPVMHPHGAPPNHRPWQMKDLQAIKQEVSQAAPGSPQFMQTIRLAVQQFDPTAKDLQDLLQYLCSSLVASLHHQQLDSLISEAETRGITGYNPLAGPLRVQANNPQQQGLRREYQQLWLAAFAALPGSAKDPSWASILQGLEEPYHAFVERLNIALDNGLPEGTPKDPILRSLAYSNANKECQKLLQARGHTNSPLGDMLRACQAWTPKDKTKVLVVQPKKPPPNQPCFRCGKAGHWSRDCTQPRPPPGPCPLCQDPTHWKRDCPRLKPTIPEPEPEEDALLLDLPADIPHPKNLHRGGGLTSPPTLQQVLPNQDPTSILPVIPLDPARRPVIKAQIDTQTSHPKTIEALLDTGADMTVLPIALFSSNTPLKNTSVLGAGGQTQDHFKLTSLPVLIRLPFRTTPIVLTSCLVDTKNNWAIIGRDALQQCQGVLYLPEAKRPPVILPIQAPAVLGLEHLPRPPEISQFPLNQNASRPCNTWSGRPWRQAISNPTPGQEITQYSQLKKPMEPGDSSTTCGPLTL</sequence>
<comment type="function">
    <molecule>Gag-Pro polyprotein</molecule>
    <text evidence="1">The matrix domain targets Gag, Gag-Pro and Gag-Pro-Pol polyproteins to the plasma membrane via a multipartite membrane binding signal, that includes its myristoylated N-terminus.</text>
</comment>
<comment type="function">
    <molecule>Matrix protein p19</molecule>
    <text evidence="1">Matrix protein.</text>
</comment>
<comment type="function">
    <molecule>Capsid protein p24</molecule>
    <text evidence="2">Forms the spherical core of the virus that encapsulates the genomic RNA-nucleocapsid complex.</text>
</comment>
<comment type="function">
    <molecule>Nucleocapsid protein p15-pro</molecule>
    <text evidence="2">Binds strongly to viral nucleic acids and promote their aggregation. Also destabilizes the nucleic acids duplexes via highly structured zinc-binding motifs.</text>
</comment>
<comment type="function">
    <molecule>Protease</molecule>
    <text evidence="2 5">The aspartyl protease mediates proteolytic cleavages of Gag and Gag-Pol polyproteins during or shortly after the release of the virion from the plasma membrane. Cleavages take place as an ordered, step-wise cascade to yield mature proteins. This process is called maturation. Displays maximal activity during the budding process just prior to particle release from the cell (Potential). Cleaves the translation initiation factor eIF4G leading to the inhibition of host cap-dependent translation (By similarity).</text>
</comment>
<comment type="subunit">
    <molecule>Gag-Pro polyprotein</molecule>
    <text evidence="1">Homodimer; the homodimers are part of the immature particles. Interacts with human TSG101 and NEDD4; these interactions are essential for budding and release of viral particles.</text>
</comment>
<comment type="subunit">
    <molecule>Matrix protein p19</molecule>
    <text evidence="1">Homodimer; further assembles as homohexamers.</text>
</comment>
<comment type="subcellular location">
    <molecule>Matrix protein p19</molecule>
    <subcellularLocation>
        <location evidence="1">Virion</location>
    </subcellularLocation>
</comment>
<comment type="subcellular location">
    <molecule>Capsid protein p24</molecule>
    <subcellularLocation>
        <location evidence="1">Virion</location>
    </subcellularLocation>
</comment>
<comment type="subcellular location">
    <molecule>Nucleocapsid protein p15-pro</molecule>
    <subcellularLocation>
        <location evidence="1">Virion</location>
    </subcellularLocation>
</comment>
<comment type="alternative products">
    <event type="ribosomal frameshifting"/>
    <isoform>
        <id>P14074-1</id>
        <name>Gag-Pro polyprotein</name>
        <sequence type="displayed"/>
    </isoform>
    <isoform>
        <id>P14076-1</id>
        <name>Gag polyprotein</name>
        <sequence type="external"/>
    </isoform>
    <isoform>
        <id>P14078-1</id>
        <name>Gag-Pol polyprotein</name>
        <sequence type="external"/>
    </isoform>
    <text evidence="7">This strategy of translation probably allows the virus to modulate the quantity of each viral protein.</text>
</comment>
<comment type="domain">
    <molecule>Capsid protein p24</molecule>
    <text evidence="2">The capsid protein N-terminus seems to be involved in Gag-Gag interactions.</text>
</comment>
<comment type="domain">
    <molecule>Gag-Pro polyprotein</molecule>
    <text evidence="1">Late-budding domains (L domains) are short sequence motifs essential for viral particle release. They can occur individually or in close proximity within structural proteins. They interacts with sorting cellular proteins of the multivesicular body (MVB) pathway. Most of these proteins are class E vacuolar protein sorting factors belonging to ESCRT-I, ESCRT-II or ESCRT-III complexes. Matrix protein p19 contains two L domains: a PTAP/PSAP motif which interacts with the UEV domain of TSG101, and a PPXY motif which binds to the WW domains of the ubiquitin ligase NEDD4.</text>
</comment>
<comment type="PTM">
    <molecule>Gag-Pro polyprotein</molecule>
    <text evidence="2">Specific enzymatic cleavages by the viral protease yield mature proteins. The polyprotein is cleaved during and after budding, this process is termed maturation. The protease is autoproteolytically processed at its N- and C-termini.</text>
</comment>
<comment type="PTM">
    <molecule>Matrix protein p19</molecule>
    <text evidence="1">Phosphorylation of the matrix protein p19 by MAPK1 seems to play a role in budding.</text>
</comment>
<comment type="PTM">
    <molecule>Gag-Pro polyprotein</molecule>
    <text evidence="1">Myristoylated. Myristoylation of the matrix (MA) domain mediates the transport and binding of Gag polyproteins to the host plasma membrane and is required for the assembly of viral particles.</text>
</comment>
<comment type="miscellaneous">
    <text evidence="7">HTLV-1 lineages are divided in four clades, A (Cosmopolitan), B (Central African group), C (Melanesian group) and D (New Central African group).</text>
</comment>
<comment type="miscellaneous">
    <molecule>Isoform Gag-Pro polyprotein</molecule>
    <text evidence="7">Produced by -1 ribosomal frameshifting at the gag-pro genes boundary.</text>
</comment>
<comment type="sequence caution" evidence="7">
    <conflict type="erroneous gene model prediction">
        <sequence resource="EMBL-CDS" id="BAA02930"/>
    </conflict>
</comment>
<organismHost>
    <name type="scientific">Homo sapiens</name>
    <name type="common">Human</name>
    <dbReference type="NCBI Taxonomy" id="9606"/>
</organismHost>
<name>PRO_HTL1C</name>
<dbReference type="EC" id="3.4.23.-" evidence="5"/>
<dbReference type="EMBL" id="D13784">
    <property type="protein sequence ID" value="BAA02930.1"/>
    <property type="status" value="ALT_SEQ"/>
    <property type="molecule type" value="Genomic_DNA"/>
</dbReference>
<dbReference type="EMBL" id="AF033817">
    <property type="protein sequence ID" value="AAC82580.1"/>
    <property type="molecule type" value="Genomic_DNA"/>
</dbReference>
<dbReference type="PIR" id="B28136">
    <property type="entry name" value="PNLJCN"/>
</dbReference>
<dbReference type="RefSeq" id="NP_057861.1">
    <property type="nucleotide sequence ID" value="NC_001436.1"/>
</dbReference>
<dbReference type="BMRB" id="P14074"/>
<dbReference type="SMR" id="P14074"/>
<dbReference type="MEROPS" id="A02.012"/>
<dbReference type="KEGG" id="vg:1724741"/>
<dbReference type="Proteomes" id="UP000001061">
    <property type="component" value="Segment"/>
</dbReference>
<dbReference type="Proteomes" id="UP000110593">
    <property type="component" value="Genome"/>
</dbReference>
<dbReference type="GO" id="GO:0019013">
    <property type="term" value="C:viral nucleocapsid"/>
    <property type="evidence" value="ECO:0007669"/>
    <property type="project" value="UniProtKB-KW"/>
</dbReference>
<dbReference type="GO" id="GO:0004190">
    <property type="term" value="F:aspartic-type endopeptidase activity"/>
    <property type="evidence" value="ECO:0007669"/>
    <property type="project" value="UniProtKB-KW"/>
</dbReference>
<dbReference type="GO" id="GO:0003676">
    <property type="term" value="F:nucleic acid binding"/>
    <property type="evidence" value="ECO:0007669"/>
    <property type="project" value="InterPro"/>
</dbReference>
<dbReference type="GO" id="GO:0005198">
    <property type="term" value="F:structural molecule activity"/>
    <property type="evidence" value="ECO:0007669"/>
    <property type="project" value="InterPro"/>
</dbReference>
<dbReference type="GO" id="GO:0008270">
    <property type="term" value="F:zinc ion binding"/>
    <property type="evidence" value="ECO:0007669"/>
    <property type="project" value="UniProtKB-KW"/>
</dbReference>
<dbReference type="GO" id="GO:0006508">
    <property type="term" value="P:proteolysis"/>
    <property type="evidence" value="ECO:0007669"/>
    <property type="project" value="UniProtKB-KW"/>
</dbReference>
<dbReference type="GO" id="GO:0039657">
    <property type="term" value="P:symbiont-mediated suppression of host gene expression"/>
    <property type="evidence" value="ECO:0007669"/>
    <property type="project" value="UniProtKB-KW"/>
</dbReference>
<dbReference type="GO" id="GO:0075523">
    <property type="term" value="P:viral translational frameshifting"/>
    <property type="evidence" value="ECO:0007669"/>
    <property type="project" value="UniProtKB-KW"/>
</dbReference>
<dbReference type="FunFam" id="1.10.185.10:FF:000001">
    <property type="entry name" value="Gag polyprotein"/>
    <property type="match status" value="1"/>
</dbReference>
<dbReference type="Gene3D" id="1.10.1200.30">
    <property type="match status" value="1"/>
</dbReference>
<dbReference type="Gene3D" id="2.40.70.10">
    <property type="entry name" value="Acid Proteases"/>
    <property type="match status" value="1"/>
</dbReference>
<dbReference type="Gene3D" id="1.10.185.10">
    <property type="entry name" value="Delta-retroviral matrix"/>
    <property type="match status" value="1"/>
</dbReference>
<dbReference type="Gene3D" id="1.10.375.10">
    <property type="entry name" value="Human Immunodeficiency Virus Type 1 Capsid Protein"/>
    <property type="match status" value="1"/>
</dbReference>
<dbReference type="Gene3D" id="4.10.60.10">
    <property type="entry name" value="Zinc finger, CCHC-type"/>
    <property type="match status" value="1"/>
</dbReference>
<dbReference type="InterPro" id="IPR001969">
    <property type="entry name" value="Aspartic_peptidase_AS"/>
</dbReference>
<dbReference type="InterPro" id="IPR003139">
    <property type="entry name" value="D_retro_matrix"/>
</dbReference>
<dbReference type="InterPro" id="IPR045345">
    <property type="entry name" value="Gag_p24_C"/>
</dbReference>
<dbReference type="InterPro" id="IPR001995">
    <property type="entry name" value="Peptidase_A2_cat"/>
</dbReference>
<dbReference type="InterPro" id="IPR021109">
    <property type="entry name" value="Peptidase_aspartic_dom_sf"/>
</dbReference>
<dbReference type="InterPro" id="IPR050195">
    <property type="entry name" value="Primate_lentivir_Gag_pol-like"/>
</dbReference>
<dbReference type="InterPro" id="IPR018061">
    <property type="entry name" value="Retropepsins"/>
</dbReference>
<dbReference type="InterPro" id="IPR008916">
    <property type="entry name" value="Retrov_capsid_C"/>
</dbReference>
<dbReference type="InterPro" id="IPR008919">
    <property type="entry name" value="Retrov_capsid_N"/>
</dbReference>
<dbReference type="InterPro" id="IPR010999">
    <property type="entry name" value="Retrovr_matrix"/>
</dbReference>
<dbReference type="InterPro" id="IPR001878">
    <property type="entry name" value="Znf_CCHC"/>
</dbReference>
<dbReference type="InterPro" id="IPR036875">
    <property type="entry name" value="Znf_CCHC_sf"/>
</dbReference>
<dbReference type="PANTHER" id="PTHR40389">
    <property type="entry name" value="ENDOGENOUS RETROVIRUS GROUP K MEMBER 24 GAG POLYPROTEIN-RELATED"/>
    <property type="match status" value="1"/>
</dbReference>
<dbReference type="PANTHER" id="PTHR40389:SF3">
    <property type="entry name" value="IGE-BINDING PROTEIN"/>
    <property type="match status" value="1"/>
</dbReference>
<dbReference type="Pfam" id="PF02228">
    <property type="entry name" value="Gag_p19"/>
    <property type="match status" value="1"/>
</dbReference>
<dbReference type="Pfam" id="PF00607">
    <property type="entry name" value="Gag_p24"/>
    <property type="match status" value="1"/>
</dbReference>
<dbReference type="Pfam" id="PF19317">
    <property type="entry name" value="Gag_p24_C"/>
    <property type="match status" value="1"/>
</dbReference>
<dbReference type="Pfam" id="PF00077">
    <property type="entry name" value="RVP"/>
    <property type="match status" value="1"/>
</dbReference>
<dbReference type="Pfam" id="PF00098">
    <property type="entry name" value="zf-CCHC"/>
    <property type="match status" value="1"/>
</dbReference>
<dbReference type="SMART" id="SM00343">
    <property type="entry name" value="ZnF_C2HC"/>
    <property type="match status" value="2"/>
</dbReference>
<dbReference type="SUPFAM" id="SSF50630">
    <property type="entry name" value="Acid proteases"/>
    <property type="match status" value="1"/>
</dbReference>
<dbReference type="SUPFAM" id="SSF47836">
    <property type="entry name" value="Retroviral matrix proteins"/>
    <property type="match status" value="1"/>
</dbReference>
<dbReference type="SUPFAM" id="SSF47353">
    <property type="entry name" value="Retrovirus capsid dimerization domain-like"/>
    <property type="match status" value="1"/>
</dbReference>
<dbReference type="SUPFAM" id="SSF47943">
    <property type="entry name" value="Retrovirus capsid protein, N-terminal core domain"/>
    <property type="match status" value="1"/>
</dbReference>
<dbReference type="SUPFAM" id="SSF57756">
    <property type="entry name" value="Retrovirus zinc finger-like domains"/>
    <property type="match status" value="1"/>
</dbReference>
<dbReference type="PROSITE" id="PS50175">
    <property type="entry name" value="ASP_PROT_RETROV"/>
    <property type="match status" value="1"/>
</dbReference>
<dbReference type="PROSITE" id="PS00141">
    <property type="entry name" value="ASP_PROTEASE"/>
    <property type="match status" value="1"/>
</dbReference>
<dbReference type="PROSITE" id="PS50158">
    <property type="entry name" value="ZF_CCHC"/>
    <property type="match status" value="1"/>
</dbReference>
<accession>P14074</accession>
<accession>O56227</accession>
<evidence type="ECO:0000250" key="1">
    <source>
        <dbReference type="UniProtKB" id="P03345"/>
    </source>
</evidence>
<evidence type="ECO:0000250" key="2">
    <source>
        <dbReference type="UniProtKB" id="P10274"/>
    </source>
</evidence>
<evidence type="ECO:0000255" key="3"/>
<evidence type="ECO:0000255" key="4">
    <source>
        <dbReference type="PROSITE-ProRule" id="PRU00047"/>
    </source>
</evidence>
<evidence type="ECO:0000255" key="5">
    <source>
        <dbReference type="PROSITE-ProRule" id="PRU00275"/>
    </source>
</evidence>
<evidence type="ECO:0000256" key="6">
    <source>
        <dbReference type="SAM" id="MobiDB-lite"/>
    </source>
</evidence>
<evidence type="ECO:0000305" key="7"/>
<feature type="initiator methionine" description="Removed; by host" evidence="3">
    <location>
        <position position="1"/>
    </location>
</feature>
<feature type="chain" id="PRO_0000259795" description="Gag-Pro polyprotein">
    <location>
        <begin position="2"/>
        <end position="651"/>
    </location>
</feature>
<feature type="chain" id="PRO_0000259796" description="Matrix protein p19">
    <location>
        <begin position="2"/>
        <end position="130"/>
    </location>
</feature>
<feature type="chain" id="PRO_0000259797" description="Capsid protein p24">
    <location>
        <begin position="131"/>
        <end position="344"/>
    </location>
</feature>
<feature type="chain" id="PRO_0000259798" description="Nucleocapsid protein p15-pro">
    <location>
        <begin position="345"/>
        <end position="449"/>
    </location>
</feature>
<feature type="chain" id="PRO_0000259799" description="Protease">
    <location>
        <begin position="450"/>
        <end position="574"/>
    </location>
</feature>
<feature type="peptide" id="PRO_0000259800" description="p1">
    <location>
        <begin position="575"/>
        <end position="582"/>
    </location>
</feature>
<feature type="chain" id="PRO_0000259801" description="Transframe peptide">
    <location>
        <begin position="583"/>
        <end position="651"/>
    </location>
</feature>
<feature type="domain" description="Peptidase A2" evidence="5">
    <location>
        <begin position="476"/>
        <end position="554"/>
    </location>
</feature>
<feature type="zinc finger region" description="CCHC-type 1" evidence="4">
    <location>
        <begin position="355"/>
        <end position="372"/>
    </location>
</feature>
<feature type="zinc finger region" description="CCHC-type 2" evidence="4">
    <location>
        <begin position="378"/>
        <end position="395"/>
    </location>
</feature>
<feature type="region of interest" description="Disordered" evidence="6">
    <location>
        <begin position="93"/>
        <end position="142"/>
    </location>
</feature>
<feature type="region of interest" description="Disordered" evidence="6">
    <location>
        <begin position="631"/>
        <end position="651"/>
    </location>
</feature>
<feature type="short sequence motif" description="PPXY motif" evidence="1">
    <location>
        <begin position="118"/>
        <end position="121"/>
    </location>
</feature>
<feature type="short sequence motif" description="PTAP/PSAP motif" evidence="1">
    <location>
        <begin position="124"/>
        <end position="127"/>
    </location>
</feature>
<feature type="compositionally biased region" description="Polar residues" evidence="6">
    <location>
        <begin position="641"/>
        <end position="651"/>
    </location>
</feature>
<feature type="active site" description="For protease activity; shared with dimeric partner" evidence="5">
    <location>
        <position position="481"/>
    </location>
</feature>
<feature type="site" description="Cleavage; by viral protease" evidence="2">
    <location>
        <begin position="130"/>
        <end position="131"/>
    </location>
</feature>
<feature type="site" description="Cleavage; by viral protease" evidence="2">
    <location>
        <begin position="344"/>
        <end position="345"/>
    </location>
</feature>
<feature type="site" description="Cleavage; by viral protease" evidence="2">
    <location>
        <begin position="449"/>
        <end position="450"/>
    </location>
</feature>
<feature type="site" description="Cleavage; by viral protease" evidence="2">
    <location>
        <begin position="574"/>
        <end position="575"/>
    </location>
</feature>
<feature type="site" description="Cleavage; by viral protease" evidence="2">
    <location>
        <begin position="582"/>
        <end position="583"/>
    </location>
</feature>
<feature type="modified residue" description="Phosphoserine; by host MAPK1" evidence="1">
    <location>
        <position position="105"/>
    </location>
</feature>
<feature type="lipid moiety-binding region" description="N-myristoyl glycine; by host" evidence="3">
    <location>
        <position position="2"/>
    </location>
</feature>
<gene>
    <name type="primary">gag-pro</name>
    <name type="synonym">prt</name>
</gene>
<keyword id="KW-0064">Aspartyl protease</keyword>
<keyword id="KW-0167">Capsid protein</keyword>
<keyword id="KW-1262">Eukaryotic host gene expression shutoff by virus</keyword>
<keyword id="KW-1193">Eukaryotic host translation shutoff by virus</keyword>
<keyword id="KW-1190">Host gene expression shutoff by virus</keyword>
<keyword id="KW-0945">Host-virus interaction</keyword>
<keyword id="KW-0378">Hydrolase</keyword>
<keyword id="KW-0449">Lipoprotein</keyword>
<keyword id="KW-0479">Metal-binding</keyword>
<keyword id="KW-0519">Myristate</keyword>
<keyword id="KW-0597">Phosphoprotein</keyword>
<keyword id="KW-0645">Protease</keyword>
<keyword id="KW-1185">Reference proteome</keyword>
<keyword id="KW-0677">Repeat</keyword>
<keyword id="KW-0688">Ribosomal frameshifting</keyword>
<keyword id="KW-0543">Viral nucleoprotein</keyword>
<keyword id="KW-0946">Virion</keyword>
<keyword id="KW-0862">Zinc</keyword>
<keyword id="KW-0863">Zinc-finger</keyword>
<protein>
    <recommendedName>
        <fullName>Gag-Pro polyprotein</fullName>
    </recommendedName>
    <alternativeName>
        <fullName>Pr76Gag-Pro</fullName>
    </alternativeName>
    <component>
        <recommendedName>
            <fullName>Matrix protein p19</fullName>
            <shortName>MA</shortName>
        </recommendedName>
    </component>
    <component>
        <recommendedName>
            <fullName>Capsid protein p24</fullName>
            <shortName>CA</shortName>
        </recommendedName>
    </component>
    <component>
        <recommendedName>
            <fullName>Nucleocapsid protein p15-pro</fullName>
            <shortName>NC'</shortName>
            <shortName>NC-pro</shortName>
        </recommendedName>
    </component>
    <component>
        <recommendedName>
            <fullName>Protease</fullName>
            <shortName>PR</shortName>
            <ecNumber evidence="5">3.4.23.-</ecNumber>
        </recommendedName>
    </component>
    <component>
        <recommendedName>
            <fullName>p1</fullName>
        </recommendedName>
    </component>
    <component>
        <recommendedName>
            <fullName>Transframe peptide</fullName>
            <shortName>TFP</shortName>
        </recommendedName>
        <alternativeName>
            <fullName>p8</fullName>
        </alternativeName>
    </component>
</protein>
<reference key="1">
    <citation type="journal article" date="1988" name="J. Gen. Virol.">
        <title>Molecular cloning and complete nucleotide sequence of an adult T cell leukaemia virus/human T cell leukaemia virus type I (ATLV/HTLV-I) isolate of Caribbean origin: relationship to other members of the ATLV/HTLV-I subgroup.</title>
        <authorList>
            <person name="Malik K.T.A."/>
            <person name="Even J."/>
            <person name="Karpas A."/>
        </authorList>
    </citation>
    <scope>NUCLEOTIDE SEQUENCE [GENOMIC DNA]</scope>
</reference>
<proteinExistence type="inferred from homology"/>